<sequence length="1464" mass="168437">MLLSPSLLLPLLLLLGAPRGCAEGVAAALTPERLLEWQDKGIFVIQSESLKKCIQAGKSVLTLENCKQANKHMLWKWVSNHGLFNIGGSGCLGLNFSAPEQPLSLYECDSTLVSLRWRCDRKMITGPLQYSVQVAHDNTVVASRKYFHKWISYGSGGGDICEYLHKDLHTIKGNAHGMPCMFPFQYNHQWHHECTREGREDDLLWCATTSRYERDEKWGFCPDPTSAEVGCDTIWEKDLNSHICYQFNLLSSLSWSEAHSSCQMQGGALLSITDETEENFIREHMSSKTVEVWMGLNQLDEHAGWQWSDGTPLNYLNWSPEVNFEPFVEDHCGTFSSFIPSAWRSRDCASTLPYVCKKYLNHIDHEIVEKDAWKYYATHCEPGWNPYNRNCYKLQKEEKTWHEALRSCQADNSALIDITSLAEVEFLVTLLGDENASETWIGLSSNKIPVSFEWSNDSSVIFTNWHTLEPQIFPNRSQLCVSAEQSEGHWKVKNCEETLFYVCKKAGHVLSDAESGCQEGWERHGGFCYKIDTVLRSFDQASSGYYCPPALVTITNRFEQAFITSLIGSVVKMKDSYFWIALQDQNDTGEYTWKPAGQKPEPVQYTHWNAHQPRYSGGCVAMRGRHPPGRWEVKHCRHFKAMSLCKQPVENQEKAEYEERWPFHPCYLDWESEPGLASCFKVFHSEKVLMKRTWREAEAFCEEFGAHLASFAHIEEENFVNELLYSKFNWTEERQFWIGFNKRNPLNAGSWEWSDRIPVVSSFLDNNYFGEDARNCAVYKANKTLLPLHCGSKREWICKIPRDVKPKIPFWYQYDVPWLFYQDAEYLFHTFASEWLNFEFVCSWLHSDLLTIHSAHEQEFIHSKIKALSKYGASWWIGLQEERANDEFRWRDGTPVIYQNWDTGRERPVNNQSQRCGFISSITGLWGSEECSVSMPSICKRKKVLLIEKKKDTPKQHGTCPKGWLYFNYKCLLLNIPKDPNSWKNWMHAQHFCAEEGGTLVAIESEVEQAFITMNLFGQTTNVWIGLQNDDYETWLNGKPVVYSNWSPFDIINIPSHNTTDVQKHIPLCALLSSNPNFHFTGKWYFEDCGKEGYGFVCEKMQDTSGHGVNTSDMYPMPNTLEYGNRTYKIINANMTWYAAIKTCLMHGTQLVSITDQYHQSFLTVVLNRLGYAHWIGLFTTDNGLNFDWSDGTKSSFTFWKDEESSLLGDCVFADTNGLWHSTACESFLQGAICHVPPETRQSEHPELCSETSIPWIKFKSNCYSFSTVLDRMSFEAAHEFCKKEGSNLLTIKDEAENAFLLEELFAFGSSVQMVWLNAQFDGNNETIKWFDGTPTDQSNWGIRKPDTDYFKPHHCVALRIPEGLQLSLCQEKKGFICKMEADIRTAEELPEKGPSHSIIPLAVVLTLIVIVAICTLSFCIYKHNGGFFRRLAGFRNPYYPATNFSTVHLEENILISDLEKSDQ</sequence>
<feature type="signal peptide" evidence="1">
    <location>
        <begin position="1"/>
        <end position="22"/>
    </location>
</feature>
<feature type="chain" id="PRO_0000311252" description="Secretory phospholipase A2 receptor">
    <location>
        <begin position="23"/>
        <end position="1464"/>
    </location>
</feature>
<feature type="chain" id="PRO_0000311253" description="Soluble secretory phospholipase A2 receptor" evidence="1">
    <location>
        <begin position="23"/>
        <end status="unknown"/>
    </location>
</feature>
<feature type="topological domain" description="Extracellular" evidence="4">
    <location>
        <begin position="23"/>
        <end position="1398"/>
    </location>
</feature>
<feature type="transmembrane region" description="Helical" evidence="4">
    <location>
        <begin position="1399"/>
        <end position="1419"/>
    </location>
</feature>
<feature type="topological domain" description="Cytoplasmic" evidence="4">
    <location>
        <begin position="1420"/>
        <end position="1464"/>
    </location>
</feature>
<feature type="domain" description="Ricin B-type lectin" evidence="6">
    <location>
        <begin position="40"/>
        <end position="163"/>
    </location>
</feature>
<feature type="domain" description="Fibronectin type-II" evidence="7">
    <location>
        <begin position="175"/>
        <end position="223"/>
    </location>
</feature>
<feature type="domain" description="C-type lectin 1" evidence="5">
    <location>
        <begin position="240"/>
        <end position="357"/>
    </location>
</feature>
<feature type="domain" description="C-type lectin 2" evidence="5">
    <location>
        <begin position="387"/>
        <end position="504"/>
    </location>
</feature>
<feature type="domain" description="C-type lectin 3" evidence="5">
    <location>
        <begin position="524"/>
        <end position="645"/>
    </location>
</feature>
<feature type="domain" description="C-type lectin 4" evidence="5">
    <location>
        <begin position="675"/>
        <end position="799"/>
    </location>
</feature>
<feature type="domain" description="C-type lectin 5" evidence="5">
    <location>
        <begin position="821"/>
        <end position="940"/>
    </location>
</feature>
<feature type="domain" description="C-type lectin 6" evidence="5">
    <location>
        <begin position="967"/>
        <end position="1098"/>
    </location>
</feature>
<feature type="domain" description="C-type lectin 7" evidence="5">
    <location>
        <begin position="1123"/>
        <end position="1234"/>
    </location>
</feature>
<feature type="domain" description="C-type lectin 8" evidence="5">
    <location>
        <begin position="1259"/>
        <end position="1379"/>
    </location>
</feature>
<feature type="short sequence motif" description="Endocytosis signal">
    <location>
        <begin position="1437"/>
        <end position="1443"/>
    </location>
</feature>
<feature type="glycosylation site" description="N-linked (GlcNAc...) asparagine" evidence="4">
    <location>
        <position position="95"/>
    </location>
</feature>
<feature type="glycosylation site" description="N-linked (GlcNAc...) asparagine" evidence="4">
    <location>
        <position position="456"/>
    </location>
</feature>
<feature type="disulfide bond" evidence="1">
    <location>
        <begin position="53"/>
        <end position="66"/>
    </location>
</feature>
<feature type="disulfide bond" evidence="1">
    <location>
        <begin position="91"/>
        <end position="108"/>
    </location>
</feature>
<feature type="disulfide bond" evidence="1">
    <location>
        <begin position="180"/>
        <end position="206"/>
    </location>
</feature>
<feature type="disulfide bond" evidence="1">
    <location>
        <begin position="194"/>
        <end position="221"/>
    </location>
</feature>
<feature type="disulfide bond" evidence="1">
    <location>
        <begin position="262"/>
        <end position="356"/>
    </location>
</feature>
<feature type="disulfide bond" evidence="1">
    <location>
        <begin position="332"/>
        <end position="348"/>
    </location>
</feature>
<feature type="disulfide bond" evidence="1">
    <location>
        <begin position="408"/>
        <end position="503"/>
    </location>
</feature>
<feature type="disulfide bond" evidence="1">
    <location>
        <begin position="480"/>
        <end position="495"/>
    </location>
</feature>
<feature type="disulfide bond" evidence="1">
    <location>
        <begin position="619"/>
        <end position="636"/>
    </location>
</feature>
<feature type="disulfide bond" evidence="1">
    <location>
        <begin position="701"/>
        <end position="798"/>
    </location>
</feature>
<feature type="disulfide bond" evidence="1">
    <location>
        <begin position="776"/>
        <end position="790"/>
    </location>
</feature>
<feature type="disulfide bond" evidence="1">
    <location>
        <begin position="842"/>
        <end position="939"/>
    </location>
</feature>
<feature type="disulfide bond" evidence="1">
    <location>
        <begin position="916"/>
        <end position="931"/>
    </location>
</feature>
<feature type="disulfide bond" evidence="1">
    <location>
        <begin position="1069"/>
        <end position="1089"/>
    </location>
</feature>
<feature type="disulfide bond" evidence="1">
    <location>
        <begin position="1211"/>
        <end position="1225"/>
    </location>
</feature>
<feature type="disulfide bond" evidence="1">
    <location>
        <begin position="1282"/>
        <end position="1378"/>
    </location>
</feature>
<feature type="disulfide bond" evidence="1">
    <location>
        <begin position="1356"/>
        <end position="1370"/>
    </location>
</feature>
<keyword id="KW-1003">Cell membrane</keyword>
<keyword id="KW-1015">Disulfide bond</keyword>
<keyword id="KW-0254">Endocytosis</keyword>
<keyword id="KW-0325">Glycoprotein</keyword>
<keyword id="KW-0430">Lectin</keyword>
<keyword id="KW-0472">Membrane</keyword>
<keyword id="KW-0675">Receptor</keyword>
<keyword id="KW-1185">Reference proteome</keyword>
<keyword id="KW-0677">Repeat</keyword>
<keyword id="KW-0964">Secreted</keyword>
<keyword id="KW-0732">Signal</keyword>
<keyword id="KW-0812">Transmembrane</keyword>
<keyword id="KW-1133">Transmembrane helix</keyword>
<comment type="function">
    <text evidence="1">Receptor for secretory phospholipase A2 (sPLA2). Also able to bind to snake PA2-like toxins. Although its precise function remains unclear, binding of sPLA2 to its receptor participates in both positive and negative regulation of sPLA2 functions as well as clearance of sPLA2. Binding of sPLA2-IB/PLA2G1B induces various effects depending on the cell type, such as activation of the mitogen-activated protein kinase (MAPK) cascade to induce cell proliferation, the production of lipid mediators, selective release of arachidonic acid in bone marrow-derived mast cells. In neutrophils, binding of sPLA2-IB/PLA2G1B can activate p38 MAPK to stimulate elastase release and cell adhesion. May be involved in responses in pro-inflammatory cytokine productions during endotoxic shock. Also has endocytic properties and rapidly internalizes sPLA2 ligands, which is particularly important for the clearance of extracellular sPLA2s to protect their potent enzymatic activities. The soluble secretory phospholipase A2 receptor form is circulating and acts as a negative regulator of sPLA2 functions by blocking the biological functions of sPLA2-IB/PLA2G1B and sPLA2-X/PLA2G10 (By similarity).</text>
</comment>
<comment type="subunit">
    <text evidence="2 3">Interacts with sPLA2-IB/PLA2G1B; this interaction mediates intracellular signaling as well as clearance of extracellular sPLA2-IB/PLA2G1B via endocytotic pathway (By similarity). Interacts with sPLA2-X/PLA2G10; this interaction mediates sPLA2-X/PLA2G10 clearance and inactivation (By similarity).</text>
</comment>
<comment type="subcellular location">
    <subcellularLocation>
        <location evidence="1">Cell membrane</location>
        <topology evidence="1">Single-pass type I membrane protein</topology>
    </subcellularLocation>
</comment>
<comment type="subcellular location">
    <molecule>Soluble secretory phospholipase A2 receptor</molecule>
    <subcellularLocation>
        <location evidence="1">Secreted</location>
    </subcellularLocation>
</comment>
<comment type="domain">
    <text evidence="1">C-type lectin domains 3-5 mediate the interaction with phospholipase PLA2G1B.</text>
</comment>
<comment type="domain">
    <text evidence="1">The endocytosis signal probably mediates endocytosis via clathrin-coated pits.</text>
</comment>
<comment type="PTM">
    <text evidence="1">The secretory phospholipase A2 receptor form may be produced by the action of metalloproteinases. It contains all extracellular domains and only lacks transmembrane and cytosolic regions. It is however unclear whether this form is produced by proteolytic cleavage as suggested by some experiments, or by alternative splicing (By similarity).</text>
</comment>
<comment type="sequence caution" evidence="8">
    <conflict type="erroneous termination">
        <sequence resource="EMBL-CDS" id="CAH92030"/>
    </conflict>
    <text>Truncated C-terminus.</text>
</comment>
<evidence type="ECO:0000250" key="1"/>
<evidence type="ECO:0000250" key="2">
    <source>
        <dbReference type="UniProtKB" id="Q13018"/>
    </source>
</evidence>
<evidence type="ECO:0000250" key="3">
    <source>
        <dbReference type="UniProtKB" id="Q62028"/>
    </source>
</evidence>
<evidence type="ECO:0000255" key="4"/>
<evidence type="ECO:0000255" key="5">
    <source>
        <dbReference type="PROSITE-ProRule" id="PRU00040"/>
    </source>
</evidence>
<evidence type="ECO:0000255" key="6">
    <source>
        <dbReference type="PROSITE-ProRule" id="PRU00174"/>
    </source>
</evidence>
<evidence type="ECO:0000255" key="7">
    <source>
        <dbReference type="PROSITE-ProRule" id="PRU00479"/>
    </source>
</evidence>
<evidence type="ECO:0000305" key="8"/>
<organism>
    <name type="scientific">Pongo abelii</name>
    <name type="common">Sumatran orangutan</name>
    <name type="synonym">Pongo pygmaeus abelii</name>
    <dbReference type="NCBI Taxonomy" id="9601"/>
    <lineage>
        <taxon>Eukaryota</taxon>
        <taxon>Metazoa</taxon>
        <taxon>Chordata</taxon>
        <taxon>Craniata</taxon>
        <taxon>Vertebrata</taxon>
        <taxon>Euteleostomi</taxon>
        <taxon>Mammalia</taxon>
        <taxon>Eutheria</taxon>
        <taxon>Euarchontoglires</taxon>
        <taxon>Primates</taxon>
        <taxon>Haplorrhini</taxon>
        <taxon>Catarrhini</taxon>
        <taxon>Hominidae</taxon>
        <taxon>Pongo</taxon>
    </lineage>
</organism>
<protein>
    <recommendedName>
        <fullName>Secretory phospholipase A2 receptor</fullName>
        <shortName>PLA2-R</shortName>
        <shortName>PLA2R</shortName>
    </recommendedName>
    <alternativeName>
        <fullName>180 kDa secretory phospholipase A2 receptor</fullName>
    </alternativeName>
    <alternativeName>
        <fullName>M-type receptor</fullName>
    </alternativeName>
    <component>
        <recommendedName>
            <fullName>Soluble secretory phospholipase A2 receptor</fullName>
            <shortName>Soluble PLA2-R</shortName>
            <shortName>Soluble PLA2R</shortName>
        </recommendedName>
    </component>
</protein>
<reference key="1">
    <citation type="submission" date="2004-11" db="EMBL/GenBank/DDBJ databases">
        <authorList>
            <consortium name="The German cDNA consortium"/>
        </authorList>
    </citation>
    <scope>NUCLEOTIDE SEQUENCE [LARGE SCALE MRNA]</scope>
    <source>
        <tissue>Kidney</tissue>
    </source>
</reference>
<name>PLA2R_PONAB</name>
<proteinExistence type="evidence at transcript level"/>
<dbReference type="EMBL" id="CR859874">
    <property type="protein sequence ID" value="CAH92030.1"/>
    <property type="status" value="ALT_SEQ"/>
    <property type="molecule type" value="mRNA"/>
</dbReference>
<dbReference type="RefSeq" id="NP_001126180.1">
    <property type="nucleotide sequence ID" value="NM_001132708.1"/>
</dbReference>
<dbReference type="SMR" id="Q5R880"/>
<dbReference type="FunCoup" id="Q5R880">
    <property type="interactions" value="180"/>
</dbReference>
<dbReference type="STRING" id="9601.ENSPPYP00000014368"/>
<dbReference type="GlyCosmos" id="Q5R880">
    <property type="glycosylation" value="2 sites, No reported glycans"/>
</dbReference>
<dbReference type="GeneID" id="100173143"/>
<dbReference type="KEGG" id="pon:100173143"/>
<dbReference type="CTD" id="22925"/>
<dbReference type="eggNOG" id="KOG4297">
    <property type="taxonomic scope" value="Eukaryota"/>
</dbReference>
<dbReference type="InParanoid" id="Q5R880"/>
<dbReference type="OrthoDB" id="5858677at2759"/>
<dbReference type="Proteomes" id="UP000001595">
    <property type="component" value="Unplaced"/>
</dbReference>
<dbReference type="GO" id="GO:0005576">
    <property type="term" value="C:extracellular region"/>
    <property type="evidence" value="ECO:0007669"/>
    <property type="project" value="UniProtKB-SubCell"/>
</dbReference>
<dbReference type="GO" id="GO:0005886">
    <property type="term" value="C:plasma membrane"/>
    <property type="evidence" value="ECO:0000250"/>
    <property type="project" value="UniProtKB"/>
</dbReference>
<dbReference type="GO" id="GO:0030246">
    <property type="term" value="F:carbohydrate binding"/>
    <property type="evidence" value="ECO:0007669"/>
    <property type="project" value="UniProtKB-KW"/>
</dbReference>
<dbReference type="GO" id="GO:0043274">
    <property type="term" value="F:phospholipase binding"/>
    <property type="evidence" value="ECO:0000250"/>
    <property type="project" value="UniProtKB"/>
</dbReference>
<dbReference type="GO" id="GO:0038023">
    <property type="term" value="F:signaling receptor activity"/>
    <property type="evidence" value="ECO:0000250"/>
    <property type="project" value="UniProtKB"/>
</dbReference>
<dbReference type="GO" id="GO:0090403">
    <property type="term" value="P:oxidative stress-induced premature senescence"/>
    <property type="evidence" value="ECO:0000250"/>
    <property type="project" value="UniProtKB"/>
</dbReference>
<dbReference type="GO" id="GO:0090238">
    <property type="term" value="P:positive regulation of arachidonate secretion"/>
    <property type="evidence" value="ECO:0000250"/>
    <property type="project" value="UniProtKB"/>
</dbReference>
<dbReference type="GO" id="GO:0001819">
    <property type="term" value="P:positive regulation of cytokine production"/>
    <property type="evidence" value="ECO:0000250"/>
    <property type="project" value="UniProtKB"/>
</dbReference>
<dbReference type="GO" id="GO:0043517">
    <property type="term" value="P:positive regulation of DNA damage response, signal transduction by p53 class mediator"/>
    <property type="evidence" value="ECO:0000250"/>
    <property type="project" value="UniProtKB"/>
</dbReference>
<dbReference type="GO" id="GO:0072593">
    <property type="term" value="P:reactive oxygen species metabolic process"/>
    <property type="evidence" value="ECO:0000250"/>
    <property type="project" value="UniProtKB"/>
</dbReference>
<dbReference type="GO" id="GO:0006898">
    <property type="term" value="P:receptor-mediated endocytosis"/>
    <property type="evidence" value="ECO:0000250"/>
    <property type="project" value="UniProtKB"/>
</dbReference>
<dbReference type="GO" id="GO:0090399">
    <property type="term" value="P:replicative senescence"/>
    <property type="evidence" value="ECO:0000250"/>
    <property type="project" value="UniProtKB"/>
</dbReference>
<dbReference type="CDD" id="cd23410">
    <property type="entry name" value="beta-trefoil_Ricin_PLA2R1"/>
    <property type="match status" value="1"/>
</dbReference>
<dbReference type="CDD" id="cd00037">
    <property type="entry name" value="CLECT"/>
    <property type="match status" value="8"/>
</dbReference>
<dbReference type="CDD" id="cd00062">
    <property type="entry name" value="FN2"/>
    <property type="match status" value="1"/>
</dbReference>
<dbReference type="FunFam" id="2.10.10.10:FF:000001">
    <property type="entry name" value="Fibronectin 1a isoform 1"/>
    <property type="match status" value="1"/>
</dbReference>
<dbReference type="FunFam" id="2.80.10.50:FF:000039">
    <property type="entry name" value="Secretory phospholipase A2 receptor"/>
    <property type="match status" value="1"/>
</dbReference>
<dbReference type="FunFam" id="3.10.100.10:FF:000032">
    <property type="entry name" value="Secretory phospholipase A2 receptor"/>
    <property type="match status" value="1"/>
</dbReference>
<dbReference type="FunFam" id="3.10.100.10:FF:000038">
    <property type="entry name" value="Secretory phospholipase A2 receptor"/>
    <property type="match status" value="1"/>
</dbReference>
<dbReference type="FunFam" id="3.10.100.10:FF:000039">
    <property type="entry name" value="Secretory phospholipase A2 receptor"/>
    <property type="match status" value="1"/>
</dbReference>
<dbReference type="FunFam" id="3.10.100.10:FF:000040">
    <property type="entry name" value="Secretory phospholipase A2 receptor"/>
    <property type="match status" value="1"/>
</dbReference>
<dbReference type="FunFam" id="3.10.100.10:FF:000046">
    <property type="entry name" value="Secretory phospholipase A2 receptor"/>
    <property type="match status" value="1"/>
</dbReference>
<dbReference type="FunFam" id="3.10.100.10:FF:000050">
    <property type="entry name" value="Secretory phospholipase A2 receptor"/>
    <property type="match status" value="1"/>
</dbReference>
<dbReference type="FunFam" id="3.10.100.10:FF:000034">
    <property type="entry name" value="secretory phospholipase A2 receptor"/>
    <property type="match status" value="1"/>
</dbReference>
<dbReference type="FunFam" id="3.10.100.10:FF:000042">
    <property type="entry name" value="secretory phospholipase A2 receptor"/>
    <property type="match status" value="1"/>
</dbReference>
<dbReference type="Gene3D" id="2.80.10.50">
    <property type="match status" value="1"/>
</dbReference>
<dbReference type="Gene3D" id="2.10.10.10">
    <property type="entry name" value="Fibronectin, type II, collagen-binding"/>
    <property type="match status" value="1"/>
</dbReference>
<dbReference type="Gene3D" id="3.10.100.10">
    <property type="entry name" value="Mannose-Binding Protein A, subunit A"/>
    <property type="match status" value="8"/>
</dbReference>
<dbReference type="InterPro" id="IPR001304">
    <property type="entry name" value="C-type_lectin-like"/>
</dbReference>
<dbReference type="InterPro" id="IPR016186">
    <property type="entry name" value="C-type_lectin-like/link_sf"/>
</dbReference>
<dbReference type="InterPro" id="IPR050111">
    <property type="entry name" value="C-type_lectin/snaclec_domain"/>
</dbReference>
<dbReference type="InterPro" id="IPR018378">
    <property type="entry name" value="C-type_lectin_CS"/>
</dbReference>
<dbReference type="InterPro" id="IPR016187">
    <property type="entry name" value="CTDL_fold"/>
</dbReference>
<dbReference type="InterPro" id="IPR000562">
    <property type="entry name" value="FN_type2_dom"/>
</dbReference>
<dbReference type="InterPro" id="IPR036943">
    <property type="entry name" value="FN_type2_sf"/>
</dbReference>
<dbReference type="InterPro" id="IPR035992">
    <property type="entry name" value="Ricin_B-like_lectins"/>
</dbReference>
<dbReference type="InterPro" id="IPR000772">
    <property type="entry name" value="Ricin_B_lectin"/>
</dbReference>
<dbReference type="PANTHER" id="PTHR22803">
    <property type="entry name" value="MANNOSE, PHOSPHOLIPASE, LECTIN RECEPTOR RELATED"/>
    <property type="match status" value="1"/>
</dbReference>
<dbReference type="Pfam" id="PF24562">
    <property type="entry name" value="CysR_MRC2_N"/>
    <property type="match status" value="1"/>
</dbReference>
<dbReference type="Pfam" id="PF00040">
    <property type="entry name" value="fn2"/>
    <property type="match status" value="1"/>
</dbReference>
<dbReference type="Pfam" id="PF00059">
    <property type="entry name" value="Lectin_C"/>
    <property type="match status" value="8"/>
</dbReference>
<dbReference type="PRINTS" id="PR00013">
    <property type="entry name" value="FNTYPEII"/>
</dbReference>
<dbReference type="SMART" id="SM00034">
    <property type="entry name" value="CLECT"/>
    <property type="match status" value="8"/>
</dbReference>
<dbReference type="SMART" id="SM00059">
    <property type="entry name" value="FN2"/>
    <property type="match status" value="1"/>
</dbReference>
<dbReference type="SMART" id="SM00458">
    <property type="entry name" value="RICIN"/>
    <property type="match status" value="1"/>
</dbReference>
<dbReference type="SUPFAM" id="SSF56436">
    <property type="entry name" value="C-type lectin-like"/>
    <property type="match status" value="8"/>
</dbReference>
<dbReference type="SUPFAM" id="SSF50370">
    <property type="entry name" value="Ricin B-like lectins"/>
    <property type="match status" value="1"/>
</dbReference>
<dbReference type="PROSITE" id="PS00615">
    <property type="entry name" value="C_TYPE_LECTIN_1"/>
    <property type="match status" value="3"/>
</dbReference>
<dbReference type="PROSITE" id="PS50041">
    <property type="entry name" value="C_TYPE_LECTIN_2"/>
    <property type="match status" value="8"/>
</dbReference>
<dbReference type="PROSITE" id="PS00023">
    <property type="entry name" value="FN2_1"/>
    <property type="match status" value="1"/>
</dbReference>
<dbReference type="PROSITE" id="PS51092">
    <property type="entry name" value="FN2_2"/>
    <property type="match status" value="1"/>
</dbReference>
<dbReference type="PROSITE" id="PS50231">
    <property type="entry name" value="RICIN_B_LECTIN"/>
    <property type="match status" value="1"/>
</dbReference>
<accession>Q5R880</accession>
<gene>
    <name type="primary">PLA2R1</name>
</gene>